<feature type="chain" id="PRO_1000019610" description="Serine--tRNA ligase">
    <location>
        <begin position="1"/>
        <end position="426"/>
    </location>
</feature>
<feature type="binding site" evidence="1">
    <location>
        <begin position="235"/>
        <end position="237"/>
    </location>
    <ligand>
        <name>L-serine</name>
        <dbReference type="ChEBI" id="CHEBI:33384"/>
    </ligand>
</feature>
<feature type="binding site" evidence="1">
    <location>
        <begin position="266"/>
        <end position="268"/>
    </location>
    <ligand>
        <name>ATP</name>
        <dbReference type="ChEBI" id="CHEBI:30616"/>
    </ligand>
</feature>
<feature type="binding site" evidence="1">
    <location>
        <position position="289"/>
    </location>
    <ligand>
        <name>L-serine</name>
        <dbReference type="ChEBI" id="CHEBI:33384"/>
    </ligand>
</feature>
<feature type="binding site" evidence="1">
    <location>
        <begin position="353"/>
        <end position="356"/>
    </location>
    <ligand>
        <name>ATP</name>
        <dbReference type="ChEBI" id="CHEBI:30616"/>
    </ligand>
</feature>
<feature type="binding site" evidence="1">
    <location>
        <position position="389"/>
    </location>
    <ligand>
        <name>L-serine</name>
        <dbReference type="ChEBI" id="CHEBI:33384"/>
    </ligand>
</feature>
<accession>Q3MCE0</accession>
<gene>
    <name evidence="1" type="primary">serS</name>
    <name type="ordered locus">Ava_1724</name>
</gene>
<organism>
    <name type="scientific">Trichormus variabilis (strain ATCC 29413 / PCC 7937)</name>
    <name type="common">Anabaena variabilis</name>
    <dbReference type="NCBI Taxonomy" id="240292"/>
    <lineage>
        <taxon>Bacteria</taxon>
        <taxon>Bacillati</taxon>
        <taxon>Cyanobacteriota</taxon>
        <taxon>Cyanophyceae</taxon>
        <taxon>Nostocales</taxon>
        <taxon>Nostocaceae</taxon>
        <taxon>Trichormus</taxon>
    </lineage>
</organism>
<evidence type="ECO:0000255" key="1">
    <source>
        <dbReference type="HAMAP-Rule" id="MF_00176"/>
    </source>
</evidence>
<keyword id="KW-0030">Aminoacyl-tRNA synthetase</keyword>
<keyword id="KW-0067">ATP-binding</keyword>
<keyword id="KW-0963">Cytoplasm</keyword>
<keyword id="KW-0436">Ligase</keyword>
<keyword id="KW-0547">Nucleotide-binding</keyword>
<keyword id="KW-0648">Protein biosynthesis</keyword>
<proteinExistence type="inferred from homology"/>
<name>SYS_TRIV2</name>
<reference key="1">
    <citation type="journal article" date="2014" name="Stand. Genomic Sci.">
        <title>Complete genome sequence of Anabaena variabilis ATCC 29413.</title>
        <authorList>
            <person name="Thiel T."/>
            <person name="Pratte B.S."/>
            <person name="Zhong J."/>
            <person name="Goodwin L."/>
            <person name="Copeland A."/>
            <person name="Lucas S."/>
            <person name="Han C."/>
            <person name="Pitluck S."/>
            <person name="Land M.L."/>
            <person name="Kyrpides N.C."/>
            <person name="Woyke T."/>
        </authorList>
    </citation>
    <scope>NUCLEOTIDE SEQUENCE [LARGE SCALE GENOMIC DNA]</scope>
    <source>
        <strain>ATCC 29413 / PCC 7937</strain>
    </source>
</reference>
<protein>
    <recommendedName>
        <fullName evidence="1">Serine--tRNA ligase</fullName>
        <ecNumber evidence="1">6.1.1.11</ecNumber>
    </recommendedName>
    <alternativeName>
        <fullName evidence="1">Seryl-tRNA synthetase</fullName>
        <shortName evidence="1">SerRS</shortName>
    </alternativeName>
    <alternativeName>
        <fullName evidence="1">Seryl-tRNA(Ser/Sec) synthetase</fullName>
    </alternativeName>
</protein>
<sequence length="426" mass="47740">MLDIKQIRENPQLIQERLNSRSGTYDIQPILQLDKQQRELEATRSQIQARSNEIGKIVGQKIKSGINPQDPEIQALRDEGNSIKAQLSELEPREKELKAEIEQLILALPNLPSDSTPIGKSEEENVEVRRWGDEYLPQNPNIIPHWEIGEKLGILNFERAVKVAQSRFVNLIGAGAALERALINFMLKTQTVAGYVEVSPPLLVNTDSLTGTGQLPKFAEESFKCADDELWLIPTAEVPVTNLYRGEILAAENLPIYHCAYTPCFRREAGSYGRDMRGLIRLHQFNKVELVKVVHPSTSFDELEKLVGNAEAILQALKLPYRVINLCTGDLGFGATKTYDLEVWLPSSGKYREISSCSNCFDFQARRADIRFKEAGKKGTQFVHTLNGSGLAVGRTMAAILENYQQPDGTILIPEVLQVYLGREVL</sequence>
<dbReference type="EC" id="6.1.1.11" evidence="1"/>
<dbReference type="EMBL" id="CP000117">
    <property type="protein sequence ID" value="ABA21346.1"/>
    <property type="molecule type" value="Genomic_DNA"/>
</dbReference>
<dbReference type="SMR" id="Q3MCE0"/>
<dbReference type="STRING" id="240292.Ava_1724"/>
<dbReference type="KEGG" id="ava:Ava_1724"/>
<dbReference type="eggNOG" id="COG0172">
    <property type="taxonomic scope" value="Bacteria"/>
</dbReference>
<dbReference type="HOGENOM" id="CLU_023797_1_1_3"/>
<dbReference type="UniPathway" id="UPA00906">
    <property type="reaction ID" value="UER00895"/>
</dbReference>
<dbReference type="Proteomes" id="UP000002533">
    <property type="component" value="Chromosome"/>
</dbReference>
<dbReference type="GO" id="GO:0005737">
    <property type="term" value="C:cytoplasm"/>
    <property type="evidence" value="ECO:0007669"/>
    <property type="project" value="UniProtKB-SubCell"/>
</dbReference>
<dbReference type="GO" id="GO:0005524">
    <property type="term" value="F:ATP binding"/>
    <property type="evidence" value="ECO:0007669"/>
    <property type="project" value="UniProtKB-UniRule"/>
</dbReference>
<dbReference type="GO" id="GO:0004828">
    <property type="term" value="F:serine-tRNA ligase activity"/>
    <property type="evidence" value="ECO:0007669"/>
    <property type="project" value="UniProtKB-UniRule"/>
</dbReference>
<dbReference type="GO" id="GO:0016260">
    <property type="term" value="P:selenocysteine biosynthetic process"/>
    <property type="evidence" value="ECO:0007669"/>
    <property type="project" value="UniProtKB-UniRule"/>
</dbReference>
<dbReference type="GO" id="GO:0006434">
    <property type="term" value="P:seryl-tRNA aminoacylation"/>
    <property type="evidence" value="ECO:0007669"/>
    <property type="project" value="UniProtKB-UniRule"/>
</dbReference>
<dbReference type="CDD" id="cd00770">
    <property type="entry name" value="SerRS_core"/>
    <property type="match status" value="1"/>
</dbReference>
<dbReference type="Gene3D" id="3.30.930.10">
    <property type="entry name" value="Bira Bifunctional Protein, Domain 2"/>
    <property type="match status" value="1"/>
</dbReference>
<dbReference type="Gene3D" id="1.10.287.40">
    <property type="entry name" value="Serine-tRNA synthetase, tRNA binding domain"/>
    <property type="match status" value="1"/>
</dbReference>
<dbReference type="HAMAP" id="MF_00176">
    <property type="entry name" value="Ser_tRNA_synth_type1"/>
    <property type="match status" value="1"/>
</dbReference>
<dbReference type="InterPro" id="IPR002314">
    <property type="entry name" value="aa-tRNA-synt_IIb"/>
</dbReference>
<dbReference type="InterPro" id="IPR006195">
    <property type="entry name" value="aa-tRNA-synth_II"/>
</dbReference>
<dbReference type="InterPro" id="IPR045864">
    <property type="entry name" value="aa-tRNA-synth_II/BPL/LPL"/>
</dbReference>
<dbReference type="InterPro" id="IPR002317">
    <property type="entry name" value="Ser-tRNA-ligase_type_1"/>
</dbReference>
<dbReference type="InterPro" id="IPR015866">
    <property type="entry name" value="Ser-tRNA-synth_1_N"/>
</dbReference>
<dbReference type="InterPro" id="IPR042103">
    <property type="entry name" value="SerRS_1_N_sf"/>
</dbReference>
<dbReference type="InterPro" id="IPR033729">
    <property type="entry name" value="SerRS_core"/>
</dbReference>
<dbReference type="InterPro" id="IPR010978">
    <property type="entry name" value="tRNA-bd_arm"/>
</dbReference>
<dbReference type="NCBIfam" id="TIGR00414">
    <property type="entry name" value="serS"/>
    <property type="match status" value="1"/>
</dbReference>
<dbReference type="PANTHER" id="PTHR43697:SF1">
    <property type="entry name" value="SERINE--TRNA LIGASE"/>
    <property type="match status" value="1"/>
</dbReference>
<dbReference type="PANTHER" id="PTHR43697">
    <property type="entry name" value="SERYL-TRNA SYNTHETASE"/>
    <property type="match status" value="1"/>
</dbReference>
<dbReference type="Pfam" id="PF02403">
    <property type="entry name" value="Seryl_tRNA_N"/>
    <property type="match status" value="1"/>
</dbReference>
<dbReference type="Pfam" id="PF00587">
    <property type="entry name" value="tRNA-synt_2b"/>
    <property type="match status" value="1"/>
</dbReference>
<dbReference type="PIRSF" id="PIRSF001529">
    <property type="entry name" value="Ser-tRNA-synth_IIa"/>
    <property type="match status" value="1"/>
</dbReference>
<dbReference type="PRINTS" id="PR00981">
    <property type="entry name" value="TRNASYNTHSER"/>
</dbReference>
<dbReference type="SUPFAM" id="SSF55681">
    <property type="entry name" value="Class II aaRS and biotin synthetases"/>
    <property type="match status" value="1"/>
</dbReference>
<dbReference type="SUPFAM" id="SSF46589">
    <property type="entry name" value="tRNA-binding arm"/>
    <property type="match status" value="1"/>
</dbReference>
<dbReference type="PROSITE" id="PS50862">
    <property type="entry name" value="AA_TRNA_LIGASE_II"/>
    <property type="match status" value="1"/>
</dbReference>
<comment type="function">
    <text evidence="1">Catalyzes the attachment of serine to tRNA(Ser). Is also able to aminoacylate tRNA(Sec) with serine, to form the misacylated tRNA L-seryl-tRNA(Sec), which will be further converted into selenocysteinyl-tRNA(Sec).</text>
</comment>
<comment type="catalytic activity">
    <reaction evidence="1">
        <text>tRNA(Ser) + L-serine + ATP = L-seryl-tRNA(Ser) + AMP + diphosphate + H(+)</text>
        <dbReference type="Rhea" id="RHEA:12292"/>
        <dbReference type="Rhea" id="RHEA-COMP:9669"/>
        <dbReference type="Rhea" id="RHEA-COMP:9703"/>
        <dbReference type="ChEBI" id="CHEBI:15378"/>
        <dbReference type="ChEBI" id="CHEBI:30616"/>
        <dbReference type="ChEBI" id="CHEBI:33019"/>
        <dbReference type="ChEBI" id="CHEBI:33384"/>
        <dbReference type="ChEBI" id="CHEBI:78442"/>
        <dbReference type="ChEBI" id="CHEBI:78533"/>
        <dbReference type="ChEBI" id="CHEBI:456215"/>
        <dbReference type="EC" id="6.1.1.11"/>
    </reaction>
</comment>
<comment type="catalytic activity">
    <reaction evidence="1">
        <text>tRNA(Sec) + L-serine + ATP = L-seryl-tRNA(Sec) + AMP + diphosphate + H(+)</text>
        <dbReference type="Rhea" id="RHEA:42580"/>
        <dbReference type="Rhea" id="RHEA-COMP:9742"/>
        <dbReference type="Rhea" id="RHEA-COMP:10128"/>
        <dbReference type="ChEBI" id="CHEBI:15378"/>
        <dbReference type="ChEBI" id="CHEBI:30616"/>
        <dbReference type="ChEBI" id="CHEBI:33019"/>
        <dbReference type="ChEBI" id="CHEBI:33384"/>
        <dbReference type="ChEBI" id="CHEBI:78442"/>
        <dbReference type="ChEBI" id="CHEBI:78533"/>
        <dbReference type="ChEBI" id="CHEBI:456215"/>
        <dbReference type="EC" id="6.1.1.11"/>
    </reaction>
</comment>
<comment type="pathway">
    <text evidence="1">Aminoacyl-tRNA biosynthesis; selenocysteinyl-tRNA(Sec) biosynthesis; L-seryl-tRNA(Sec) from L-serine and tRNA(Sec): step 1/1.</text>
</comment>
<comment type="subunit">
    <text evidence="1">Homodimer. The tRNA molecule binds across the dimer.</text>
</comment>
<comment type="subcellular location">
    <subcellularLocation>
        <location evidence="1">Cytoplasm</location>
    </subcellularLocation>
</comment>
<comment type="domain">
    <text evidence="1">Consists of two distinct domains, a catalytic core and a N-terminal extension that is involved in tRNA binding.</text>
</comment>
<comment type="similarity">
    <text evidence="1">Belongs to the class-II aminoacyl-tRNA synthetase family. Type-1 seryl-tRNA synthetase subfamily.</text>
</comment>